<feature type="chain" id="PRO_0000109949" description="Oxygen-independent coproporphyrinogen III oxidase">
    <location>
        <begin position="1"/>
        <end position="452"/>
    </location>
</feature>
<feature type="domain" description="Radical SAM core" evidence="2">
    <location>
        <begin position="45"/>
        <end position="278"/>
    </location>
</feature>
<feature type="binding site" evidence="1">
    <location>
        <position position="54"/>
    </location>
    <ligand>
        <name>S-adenosyl-L-methionine</name>
        <dbReference type="ChEBI" id="CHEBI:59789"/>
        <label>1</label>
    </ligand>
</feature>
<feature type="binding site" evidence="1">
    <location>
        <position position="60"/>
    </location>
    <ligand>
        <name>[4Fe-4S] cluster</name>
        <dbReference type="ChEBI" id="CHEBI:49883"/>
        <note>4Fe-4S-S-AdoMet</note>
    </ligand>
</feature>
<feature type="binding site" evidence="1">
    <location>
        <position position="64"/>
    </location>
    <ligand>
        <name>[4Fe-4S] cluster</name>
        <dbReference type="ChEBI" id="CHEBI:49883"/>
        <note>4Fe-4S-S-AdoMet</note>
    </ligand>
</feature>
<feature type="binding site" evidence="1">
    <location>
        <position position="66"/>
    </location>
    <ligand>
        <name>S-adenosyl-L-methionine</name>
        <dbReference type="ChEBI" id="CHEBI:59789"/>
        <label>2</label>
    </ligand>
</feature>
<feature type="binding site" evidence="1">
    <location>
        <position position="67"/>
    </location>
    <ligand>
        <name>[4Fe-4S] cluster</name>
        <dbReference type="ChEBI" id="CHEBI:49883"/>
        <note>4Fe-4S-S-AdoMet</note>
    </ligand>
</feature>
<feature type="binding site" evidence="1">
    <location>
        <position position="111"/>
    </location>
    <ligand>
        <name>S-adenosyl-L-methionine</name>
        <dbReference type="ChEBI" id="CHEBI:59789"/>
        <label>1</label>
    </ligand>
</feature>
<feature type="binding site" evidence="1">
    <location>
        <begin position="112"/>
        <end position="113"/>
    </location>
    <ligand>
        <name>S-adenosyl-L-methionine</name>
        <dbReference type="ChEBI" id="CHEBI:59789"/>
        <label>2</label>
    </ligand>
</feature>
<feature type="binding site" evidence="1">
    <location>
        <position position="144"/>
    </location>
    <ligand>
        <name>S-adenosyl-L-methionine</name>
        <dbReference type="ChEBI" id="CHEBI:59789"/>
        <label>1</label>
    </ligand>
</feature>
<feature type="binding site" evidence="1">
    <location>
        <position position="171"/>
    </location>
    <ligand>
        <name>S-adenosyl-L-methionine</name>
        <dbReference type="ChEBI" id="CHEBI:59789"/>
        <label>2</label>
    </ligand>
</feature>
<feature type="binding site" evidence="1">
    <location>
        <position position="183"/>
    </location>
    <ligand>
        <name>S-adenosyl-L-methionine</name>
        <dbReference type="ChEBI" id="CHEBI:59789"/>
        <label>2</label>
    </ligand>
</feature>
<feature type="binding site" evidence="1">
    <location>
        <position position="208"/>
    </location>
    <ligand>
        <name>S-adenosyl-L-methionine</name>
        <dbReference type="ChEBI" id="CHEBI:59789"/>
        <label>2</label>
    </ligand>
</feature>
<feature type="binding site" evidence="1">
    <location>
        <position position="242"/>
    </location>
    <ligand>
        <name>S-adenosyl-L-methionine</name>
        <dbReference type="ChEBI" id="CHEBI:59789"/>
        <label>2</label>
    </ligand>
</feature>
<feature type="binding site" evidence="1">
    <location>
        <position position="328"/>
    </location>
    <ligand>
        <name>S-adenosyl-L-methionine</name>
        <dbReference type="ChEBI" id="CHEBI:59789"/>
        <label>1</label>
    </ligand>
</feature>
<feature type="sequence conflict" description="In Ref. 1; AAB38508." evidence="3" ref="1">
    <original>S</original>
    <variation>C</variation>
    <location>
        <position position="22"/>
    </location>
</feature>
<feature type="sequence conflict" description="In Ref. 1; AAB38508." evidence="3" ref="1">
    <original>R</original>
    <variation>P</variation>
    <location>
        <position position="70"/>
    </location>
</feature>
<feature type="sequence conflict" description="In Ref. 1; AAB38508." evidence="3" ref="1">
    <original>LR</original>
    <variation>CA</variation>
    <location>
        <begin position="197"/>
        <end position="198"/>
    </location>
</feature>
<feature type="sequence conflict" description="In Ref. 1; AAB38508." evidence="3" ref="1">
    <original>S</original>
    <variation>T</variation>
    <location>
        <position position="302"/>
    </location>
</feature>
<feature type="sequence conflict" description="In Ref. 1; AAB38508." evidence="3" ref="1">
    <original>R</original>
    <variation>G</variation>
    <location>
        <position position="306"/>
    </location>
</feature>
<feature type="sequence conflict" description="In Ref. 1; AAB38508." evidence="3" ref="1">
    <original>G</original>
    <variation>A</variation>
    <location>
        <position position="356"/>
    </location>
</feature>
<feature type="sequence conflict" description="In Ref. 1; AAB38508." evidence="3" ref="1">
    <original>I</original>
    <variation>L</variation>
    <location>
        <position position="402"/>
    </location>
</feature>
<feature type="sequence conflict" description="In Ref. 1; AAB38508." evidence="3" ref="1">
    <original>T</original>
    <variation>S</variation>
    <location>
        <position position="443"/>
    </location>
</feature>
<comment type="function">
    <text evidence="1">Involved in the heme and chlorophyll biosynthesis. Catalyzes the anaerobic oxidative decarboxylation of propionate groups of rings A and B of coproporphyrinogen III to yield the vinyl groups in protoporphyrinogen IX.</text>
</comment>
<comment type="catalytic activity">
    <reaction evidence="1">
        <text>coproporphyrinogen III + 2 S-adenosyl-L-methionine = protoporphyrinogen IX + 2 5'-deoxyadenosine + 2 L-methionine + 2 CO2</text>
        <dbReference type="Rhea" id="RHEA:15425"/>
        <dbReference type="ChEBI" id="CHEBI:16526"/>
        <dbReference type="ChEBI" id="CHEBI:17319"/>
        <dbReference type="ChEBI" id="CHEBI:57307"/>
        <dbReference type="ChEBI" id="CHEBI:57309"/>
        <dbReference type="ChEBI" id="CHEBI:57844"/>
        <dbReference type="ChEBI" id="CHEBI:59789"/>
        <dbReference type="EC" id="1.3.98.3"/>
    </reaction>
</comment>
<comment type="cofactor">
    <cofactor evidence="1">
        <name>[4Fe-4S] cluster</name>
        <dbReference type="ChEBI" id="CHEBI:49883"/>
    </cofactor>
    <text evidence="1">Binds 1 [4Fe-4S] cluster. The cluster is coordinated with 3 cysteines and an exchangeable S-adenosyl-L-methionine.</text>
</comment>
<comment type="pathway">
    <text>Porphyrin-containing compound metabolism; protoporphyrin-IX biosynthesis; protoporphyrinogen-IX from coproporphyrinogen-III (AdoMet route): step 1/1.</text>
</comment>
<comment type="subunit">
    <text evidence="1">Monomer.</text>
</comment>
<comment type="subcellular location">
    <subcellularLocation>
        <location evidence="1">Cytoplasm</location>
    </subcellularLocation>
</comment>
<comment type="similarity">
    <text evidence="3">Belongs to the anaerobic coproporphyrinogen-III oxidase family.</text>
</comment>
<keyword id="KW-0004">4Fe-4S</keyword>
<keyword id="KW-0963">Cytoplasm</keyword>
<keyword id="KW-0408">Iron</keyword>
<keyword id="KW-0411">Iron-sulfur</keyword>
<keyword id="KW-0479">Metal-binding</keyword>
<keyword id="KW-0560">Oxidoreductase</keyword>
<keyword id="KW-0627">Porphyrin biosynthesis</keyword>
<keyword id="KW-0949">S-adenosyl-L-methionine</keyword>
<name>HEMN_CERS5</name>
<proteinExistence type="inferred from homology"/>
<protein>
    <recommendedName>
        <fullName>Oxygen-independent coproporphyrinogen III oxidase</fullName>
        <shortName>CPO</shortName>
        <ecNumber evidence="1">1.3.98.3</ecNumber>
    </recommendedName>
    <alternativeName>
        <fullName>Coproporphyrinogen III dehydrogenase</fullName>
        <shortName>CPDH</shortName>
    </alternativeName>
</protein>
<reference key="1">
    <citation type="submission" date="1996-11" db="EMBL/GenBank/DDBJ databases">
        <authorList>
            <person name="Shi J."/>
            <person name="Bartnikas T.B."/>
            <person name="Shapleigh J.P."/>
        </authorList>
    </citation>
    <scope>NUCLEOTIDE SEQUENCE [GENOMIC DNA]</scope>
</reference>
<reference key="2">
    <citation type="submission" date="2007-04" db="EMBL/GenBank/DDBJ databases">
        <title>Complete sequence of chromosome of Rhodobacter sphaeroides ATCC 17025.</title>
        <authorList>
            <consortium name="US DOE Joint Genome Institute"/>
            <person name="Copeland A."/>
            <person name="Lucas S."/>
            <person name="Lapidus A."/>
            <person name="Barry K."/>
            <person name="Detter J.C."/>
            <person name="Glavina del Rio T."/>
            <person name="Hammon N."/>
            <person name="Israni S."/>
            <person name="Dalin E."/>
            <person name="Tice H."/>
            <person name="Pitluck S."/>
            <person name="Chertkov O."/>
            <person name="Brettin T."/>
            <person name="Bruce D."/>
            <person name="Han C."/>
            <person name="Schmutz J."/>
            <person name="Larimer F."/>
            <person name="Land M."/>
            <person name="Hauser L."/>
            <person name="Kyrpides N."/>
            <person name="Kim E."/>
            <person name="Richardson P."/>
            <person name="Mackenzie C."/>
            <person name="Choudhary M."/>
            <person name="Donohue T.J."/>
            <person name="Kaplan S."/>
        </authorList>
    </citation>
    <scope>NUCLEOTIDE SEQUENCE [LARGE SCALE GENOMIC DNA]</scope>
    <source>
        <strain>ATCC 17025 / ATH 2.4.3</strain>
    </source>
</reference>
<accession>P95651</accession>
<accession>A4WR64</accession>
<sequence length="452" mass="49947">MTNIALLQSLGLFDARVPRYTSYPAAPVFSGAVGADFQAQAIEALDPAVPISVYIHVPFCERLCWFCACRTQGTQTLAPVEAYVGTLLQELELVKKHLPAGVKAGRLHWGGGTPTILSPELIHKLAQAIKAVIPFAEDYEFSVEIDPMMVDEPKIRALSEEGMNRASIGIQDFTDIVQSAIGREQPFENTRACVETLRRYGVHSLNTDLVYGLPHQNRESLAATIDKVLQLGPDRVAIFGYAHVPWMAKRQKLIDENVLPNDMERHELANLAAKMFTEGGFERIGIDHFARPDDSMAVAARSGKLRRNFQGYTDDTCPTLLGIGASSISKFEQGYLQNTAATAAYIKAIEEGRLPGYRGHRMTDEDYLHGRAIEMIMCEFRLDLPALRARFGEAAETMVPRITEAAAKFAPFITVDEAGSMSIEAEGRALTRMIARVFDAYETPEARYSQAS</sequence>
<organism>
    <name type="scientific">Cereibacter sphaeroides (strain ATCC 17025 / ATH 2.4.3)</name>
    <name type="common">Rhodobacter sphaeroides</name>
    <dbReference type="NCBI Taxonomy" id="349102"/>
    <lineage>
        <taxon>Bacteria</taxon>
        <taxon>Pseudomonadati</taxon>
        <taxon>Pseudomonadota</taxon>
        <taxon>Alphaproteobacteria</taxon>
        <taxon>Rhodobacterales</taxon>
        <taxon>Paracoccaceae</taxon>
        <taxon>Cereibacter</taxon>
    </lineage>
</organism>
<dbReference type="EC" id="1.3.98.3" evidence="1"/>
<dbReference type="EMBL" id="U80081">
    <property type="protein sequence ID" value="AAB38508.1"/>
    <property type="molecule type" value="Genomic_DNA"/>
</dbReference>
<dbReference type="EMBL" id="CP000661">
    <property type="protein sequence ID" value="ABP69878.1"/>
    <property type="molecule type" value="Genomic_DNA"/>
</dbReference>
<dbReference type="PIR" id="T10882">
    <property type="entry name" value="T10882"/>
</dbReference>
<dbReference type="SMR" id="P95651"/>
<dbReference type="STRING" id="349102.Rsph17025_0977"/>
<dbReference type="KEGG" id="rsq:Rsph17025_0977"/>
<dbReference type="eggNOG" id="COG0635">
    <property type="taxonomic scope" value="Bacteria"/>
</dbReference>
<dbReference type="HOGENOM" id="CLU_027579_3_0_5"/>
<dbReference type="BioCyc" id="RSPH349102:G1G8M-1002-MONOMER"/>
<dbReference type="UniPathway" id="UPA00251">
    <property type="reaction ID" value="UER00323"/>
</dbReference>
<dbReference type="GO" id="GO:0005737">
    <property type="term" value="C:cytoplasm"/>
    <property type="evidence" value="ECO:0000250"/>
    <property type="project" value="UniProtKB"/>
</dbReference>
<dbReference type="GO" id="GO:0051539">
    <property type="term" value="F:4 iron, 4 sulfur cluster binding"/>
    <property type="evidence" value="ECO:0000250"/>
    <property type="project" value="UniProtKB"/>
</dbReference>
<dbReference type="GO" id="GO:0051989">
    <property type="term" value="F:coproporphyrinogen dehydrogenase activity"/>
    <property type="evidence" value="ECO:0000250"/>
    <property type="project" value="UniProtKB"/>
</dbReference>
<dbReference type="GO" id="GO:0004109">
    <property type="term" value="F:coproporphyrinogen oxidase activity"/>
    <property type="evidence" value="ECO:0007669"/>
    <property type="project" value="InterPro"/>
</dbReference>
<dbReference type="GO" id="GO:0046872">
    <property type="term" value="F:metal ion binding"/>
    <property type="evidence" value="ECO:0007669"/>
    <property type="project" value="UniProtKB-KW"/>
</dbReference>
<dbReference type="GO" id="GO:0006779">
    <property type="term" value="P:porphyrin-containing compound biosynthetic process"/>
    <property type="evidence" value="ECO:0000250"/>
    <property type="project" value="UniProtKB"/>
</dbReference>
<dbReference type="GO" id="GO:0006782">
    <property type="term" value="P:protoporphyrinogen IX biosynthetic process"/>
    <property type="evidence" value="ECO:0000250"/>
    <property type="project" value="UniProtKB"/>
</dbReference>
<dbReference type="FunFam" id="3.20.20.70:FF:000363">
    <property type="entry name" value="Oxygen-independent coproporphyrinogen III oxidase"/>
    <property type="match status" value="1"/>
</dbReference>
<dbReference type="Gene3D" id="1.10.10.920">
    <property type="match status" value="1"/>
</dbReference>
<dbReference type="Gene3D" id="3.20.20.70">
    <property type="entry name" value="Aldolase class I"/>
    <property type="match status" value="1"/>
</dbReference>
<dbReference type="InterPro" id="IPR013785">
    <property type="entry name" value="Aldolase_TIM"/>
</dbReference>
<dbReference type="InterPro" id="IPR004558">
    <property type="entry name" value="Coprogen_oxidase_HemN"/>
</dbReference>
<dbReference type="InterPro" id="IPR034505">
    <property type="entry name" value="Coproporphyrinogen-III_oxidase"/>
</dbReference>
<dbReference type="InterPro" id="IPR006638">
    <property type="entry name" value="Elp3/MiaA/NifB-like_rSAM"/>
</dbReference>
<dbReference type="InterPro" id="IPR007197">
    <property type="entry name" value="rSAM"/>
</dbReference>
<dbReference type="NCBIfam" id="TIGR00538">
    <property type="entry name" value="hemN"/>
    <property type="match status" value="1"/>
</dbReference>
<dbReference type="PANTHER" id="PTHR13932">
    <property type="entry name" value="COPROPORPHYRINIGEN III OXIDASE"/>
    <property type="match status" value="1"/>
</dbReference>
<dbReference type="PANTHER" id="PTHR13932:SF6">
    <property type="entry name" value="OXYGEN-INDEPENDENT COPROPORPHYRINOGEN III OXIDASE"/>
    <property type="match status" value="1"/>
</dbReference>
<dbReference type="Pfam" id="PF04055">
    <property type="entry name" value="Radical_SAM"/>
    <property type="match status" value="1"/>
</dbReference>
<dbReference type="PIRSF" id="PIRSF000167">
    <property type="entry name" value="HemN"/>
    <property type="match status" value="1"/>
</dbReference>
<dbReference type="SFLD" id="SFLDG01065">
    <property type="entry name" value="anaerobic_coproporphyrinogen-I"/>
    <property type="match status" value="1"/>
</dbReference>
<dbReference type="SFLD" id="SFLDS00029">
    <property type="entry name" value="Radical_SAM"/>
    <property type="match status" value="1"/>
</dbReference>
<dbReference type="SMART" id="SM00729">
    <property type="entry name" value="Elp3"/>
    <property type="match status" value="1"/>
</dbReference>
<dbReference type="SUPFAM" id="SSF102114">
    <property type="entry name" value="Radical SAM enzymes"/>
    <property type="match status" value="1"/>
</dbReference>
<dbReference type="PROSITE" id="PS51918">
    <property type="entry name" value="RADICAL_SAM"/>
    <property type="match status" value="1"/>
</dbReference>
<gene>
    <name type="primary">hemN</name>
    <name type="ordered locus">Rsph17025_0977</name>
</gene>
<evidence type="ECO:0000250" key="1">
    <source>
        <dbReference type="UniProtKB" id="P32131"/>
    </source>
</evidence>
<evidence type="ECO:0000255" key="2">
    <source>
        <dbReference type="PROSITE-ProRule" id="PRU01266"/>
    </source>
</evidence>
<evidence type="ECO:0000305" key="3"/>